<proteinExistence type="evidence at protein level"/>
<feature type="signal peptide">
    <location>
        <begin position="1"/>
        <end position="20"/>
    </location>
</feature>
<feature type="chain" id="PRO_0000006551" description="Photosynthetic reaction center cytochrome c subunit">
    <location>
        <begin position="21"/>
        <end position="356"/>
    </location>
</feature>
<feature type="binding site" description="axial binding residue" evidence="5 20">
    <location>
        <position position="94"/>
    </location>
    <ligand>
        <name>heme</name>
        <dbReference type="ChEBI" id="CHEBI:30413"/>
        <label>1</label>
    </ligand>
    <ligandPart>
        <name>Fe</name>
        <dbReference type="ChEBI" id="CHEBI:18248"/>
    </ligandPart>
</feature>
<feature type="binding site" description="covalent" evidence="5 20">
    <location>
        <position position="107"/>
    </location>
    <ligand>
        <name>heme</name>
        <dbReference type="ChEBI" id="CHEBI:30413"/>
        <label>1</label>
    </ligand>
</feature>
<feature type="binding site" description="covalent" evidence="5 20">
    <location>
        <position position="110"/>
    </location>
    <ligand>
        <name>heme</name>
        <dbReference type="ChEBI" id="CHEBI:30413"/>
        <label>1</label>
    </ligand>
</feature>
<feature type="binding site" description="axial binding residue" evidence="5 20">
    <location>
        <position position="111"/>
    </location>
    <ligand>
        <name>heme</name>
        <dbReference type="ChEBI" id="CHEBI:30413"/>
        <label>1</label>
    </ligand>
    <ligandPart>
        <name>Fe</name>
        <dbReference type="ChEBI" id="CHEBI:18248"/>
    </ligandPart>
</feature>
<feature type="binding site" description="axial binding residue" evidence="5 20">
    <location>
        <position position="130"/>
    </location>
    <ligand>
        <name>heme</name>
        <dbReference type="ChEBI" id="CHEBI:30413"/>
        <label>2</label>
    </ligand>
    <ligandPart>
        <name>Fe</name>
        <dbReference type="ChEBI" id="CHEBI:18248"/>
    </ligandPart>
</feature>
<feature type="binding site" description="axial binding residue" evidence="5 20">
    <location>
        <position position="144"/>
    </location>
    <ligand>
        <name>heme</name>
        <dbReference type="ChEBI" id="CHEBI:30413"/>
        <label>4</label>
    </ligand>
    <ligandPart>
        <name>Fe</name>
        <dbReference type="ChEBI" id="CHEBI:18248"/>
    </ligandPart>
</feature>
<feature type="binding site" description="covalent" evidence="5 20">
    <location>
        <position position="152"/>
    </location>
    <ligand>
        <name>heme</name>
        <dbReference type="ChEBI" id="CHEBI:30413"/>
        <label>2</label>
    </ligand>
</feature>
<feature type="binding site" description="covalent" evidence="5 20">
    <location>
        <position position="155"/>
    </location>
    <ligand>
        <name>heme</name>
        <dbReference type="ChEBI" id="CHEBI:30413"/>
        <label>2</label>
    </ligand>
</feature>
<feature type="binding site" description="axial binding residue" evidence="5 20">
    <location>
        <position position="156"/>
    </location>
    <ligand>
        <name>heme</name>
        <dbReference type="ChEBI" id="CHEBI:30413"/>
        <label>2</label>
    </ligand>
    <ligandPart>
        <name>Fe</name>
        <dbReference type="ChEBI" id="CHEBI:18248"/>
    </ligandPart>
</feature>
<feature type="binding site" description="axial binding residue" evidence="5 20">
    <location>
        <position position="253"/>
    </location>
    <ligand>
        <name>heme</name>
        <dbReference type="ChEBI" id="CHEBI:30413"/>
        <label>3</label>
    </ligand>
    <ligandPart>
        <name>Fe</name>
        <dbReference type="ChEBI" id="CHEBI:18248"/>
    </ligandPart>
</feature>
<feature type="binding site" description="covalent" evidence="5 20">
    <location>
        <position position="264"/>
    </location>
    <ligand>
        <name>heme</name>
        <dbReference type="ChEBI" id="CHEBI:30413"/>
        <label>3</label>
    </ligand>
</feature>
<feature type="binding site" description="covalent" evidence="5 20">
    <location>
        <position position="267"/>
    </location>
    <ligand>
        <name>heme</name>
        <dbReference type="ChEBI" id="CHEBI:30413"/>
        <label>3</label>
    </ligand>
</feature>
<feature type="binding site" description="axial binding residue" evidence="5 20">
    <location>
        <position position="268"/>
    </location>
    <ligand>
        <name>heme</name>
        <dbReference type="ChEBI" id="CHEBI:30413"/>
        <label>3</label>
    </ligand>
    <ligandPart>
        <name>Fe</name>
        <dbReference type="ChEBI" id="CHEBI:18248"/>
    </ligandPart>
</feature>
<feature type="binding site" description="covalent" evidence="5 20">
    <location>
        <position position="325"/>
    </location>
    <ligand>
        <name>heme</name>
        <dbReference type="ChEBI" id="CHEBI:30413"/>
        <label>4</label>
    </ligand>
</feature>
<feature type="binding site" description="covalent" evidence="5 20">
    <location>
        <position position="328"/>
    </location>
    <ligand>
        <name>heme</name>
        <dbReference type="ChEBI" id="CHEBI:30413"/>
        <label>4</label>
    </ligand>
</feature>
<feature type="binding site" description="axial binding residue" evidence="5 20">
    <location>
        <position position="329"/>
    </location>
    <ligand>
        <name>heme</name>
        <dbReference type="ChEBI" id="CHEBI:30413"/>
        <label>4</label>
    </ligand>
    <ligandPart>
        <name>Fe</name>
        <dbReference type="ChEBI" id="CHEBI:18248"/>
    </ligandPart>
</feature>
<feature type="site" description="Not N-palmitoylated" evidence="5 8 20">
    <location>
        <position position="21"/>
    </location>
</feature>
<feature type="lipid moiety-binding region" description="S-diacylglycerol cysteine" evidence="2 5 8 20">
    <location>
        <position position="21"/>
    </location>
</feature>
<feature type="mutagenesis site" description="110 mV decrease in redox potential of heme 3." evidence="4">
    <original>R</original>
    <variation>K</variation>
    <location>
        <position position="284"/>
    </location>
</feature>
<feature type="sequence conflict" description="In Ref. 2; ACK86664." evidence="13" ref="2">
    <original>A</original>
    <variation>P</variation>
    <location>
        <position position="63"/>
    </location>
</feature>
<feature type="sequence conflict" description="In Ref. 2; ACK86664." evidence="13" ref="2">
    <original>I</original>
    <variation>M</variation>
    <location>
        <position position="97"/>
    </location>
</feature>
<feature type="sequence conflict" description="In Ref. 2; ACK86664." evidence="13" ref="2">
    <original>Q</original>
    <variation>E</variation>
    <location>
        <position position="104"/>
    </location>
</feature>
<feature type="sequence conflict" description="In Ref. 2; ACK86664." evidence="13" ref="2">
    <original>T</original>
    <variation>S</variation>
    <location>
        <position position="272"/>
    </location>
</feature>
<feature type="sequence conflict" description="In Ref. 2; ACK86664." evidence="13" ref="2">
    <original>S</original>
    <variation>T</variation>
    <location>
        <position position="275"/>
    </location>
</feature>
<feature type="sequence conflict" description="In Ref. 2; ACK86664." evidence="13" ref="2">
    <original>L</original>
    <variation>M</variation>
    <location>
        <position position="297"/>
    </location>
</feature>
<feature type="sequence conflict" description="In Ref. 2; ACK86664." evidence="13" ref="2">
    <original>AS</original>
    <variation>TV</variation>
    <location>
        <begin position="307"/>
        <end position="308"/>
    </location>
</feature>
<feature type="sequence conflict" description="In Ref. 2; ACK86664." evidence="13" ref="2">
    <original>K</original>
    <variation>Q</variation>
    <location>
        <position position="343"/>
    </location>
</feature>
<feature type="helix" evidence="24">
    <location>
        <begin position="45"/>
        <end position="55"/>
    </location>
</feature>
<feature type="strand" evidence="25">
    <location>
        <begin position="69"/>
        <end position="71"/>
    </location>
</feature>
<feature type="helix" evidence="24">
    <location>
        <begin position="72"/>
        <end position="75"/>
    </location>
</feature>
<feature type="strand" evidence="24">
    <location>
        <begin position="76"/>
        <end position="78"/>
    </location>
</feature>
<feature type="strand" evidence="24">
    <location>
        <begin position="80"/>
        <end position="82"/>
    </location>
</feature>
<feature type="helix" evidence="24">
    <location>
        <begin position="87"/>
        <end position="101"/>
    </location>
</feature>
<feature type="turn" evidence="24">
    <location>
        <begin position="103"/>
        <end position="105"/>
    </location>
</feature>
<feature type="helix" evidence="24">
    <location>
        <begin position="106"/>
        <end position="109"/>
    </location>
</feature>
<feature type="helix" evidence="24">
    <location>
        <begin position="122"/>
        <end position="140"/>
    </location>
</feature>
<feature type="helix" evidence="24">
    <location>
        <begin position="142"/>
        <end position="145"/>
    </location>
</feature>
<feature type="turn" evidence="24">
    <location>
        <begin position="146"/>
        <end position="148"/>
    </location>
</feature>
<feature type="helix" evidence="24">
    <location>
        <begin position="152"/>
        <end position="156"/>
    </location>
</feature>
<feature type="strand" evidence="24">
    <location>
        <begin position="159"/>
        <end position="161"/>
    </location>
</feature>
<feature type="strand" evidence="24">
    <location>
        <begin position="172"/>
        <end position="175"/>
    </location>
</feature>
<feature type="turn" evidence="24">
    <location>
        <begin position="182"/>
        <end position="184"/>
    </location>
</feature>
<feature type="helix" evidence="24">
    <location>
        <begin position="189"/>
        <end position="191"/>
    </location>
</feature>
<feature type="helix" evidence="24">
    <location>
        <begin position="192"/>
        <end position="197"/>
    </location>
</feature>
<feature type="turn" evidence="24">
    <location>
        <begin position="198"/>
        <end position="202"/>
    </location>
</feature>
<feature type="helix" evidence="24">
    <location>
        <begin position="209"/>
        <end position="213"/>
    </location>
</feature>
<feature type="strand" evidence="26">
    <location>
        <begin position="215"/>
        <end position="217"/>
    </location>
</feature>
<feature type="strand" evidence="24">
    <location>
        <begin position="226"/>
        <end position="229"/>
    </location>
</feature>
<feature type="strand" evidence="24">
    <location>
        <begin position="234"/>
        <end position="236"/>
    </location>
</feature>
<feature type="helix" evidence="24">
    <location>
        <begin position="237"/>
        <end position="239"/>
    </location>
</feature>
<feature type="helix" evidence="24">
    <location>
        <begin position="244"/>
        <end position="260"/>
    </location>
</feature>
<feature type="helix" evidence="24">
    <location>
        <begin position="264"/>
        <end position="266"/>
    </location>
</feature>
<feature type="helix" evidence="24">
    <location>
        <begin position="270"/>
        <end position="272"/>
    </location>
</feature>
<feature type="helix" evidence="24">
    <location>
        <begin position="282"/>
        <end position="300"/>
    </location>
</feature>
<feature type="helix" evidence="24">
    <location>
        <begin position="303"/>
        <end position="307"/>
    </location>
</feature>
<feature type="helix" evidence="24">
    <location>
        <begin position="311"/>
        <end position="313"/>
    </location>
</feature>
<feature type="helix" evidence="24">
    <location>
        <begin position="325"/>
        <end position="329"/>
    </location>
</feature>
<feature type="strand" evidence="24">
    <location>
        <begin position="332"/>
        <end position="334"/>
    </location>
</feature>
<feature type="helix" evidence="24">
    <location>
        <begin position="335"/>
        <end position="338"/>
    </location>
</feature>
<feature type="helix" evidence="24">
    <location>
        <begin position="342"/>
        <end position="344"/>
    </location>
</feature>
<feature type="helix" evidence="24">
    <location>
        <begin position="346"/>
        <end position="348"/>
    </location>
</feature>
<sequence length="356" mass="39371">MKQLIVNSVATVALASLVAGCFEPPPATTTQTGFRGLSMGEVLHPATVKAKKERDAQYPPALAAVKAEGPPVSQVYKNVKVLGNLTEAEFLRTMTAITEWVSPQEGCTYCHDENNLASEAKYPYVVARRMLEMTRAINTNWTQHVAQTGVTCYTCHRGTPLPPYVRYLEPTLPLNNRETPTHVERVETRSGYVVRLAKYTAYSALNYDPFTMFLANDKRQVRVVPQTALPLVGVSRGKERRPLSDAYATFALMMSISDSLGTNCTFCHNAQTFESWGKKSTPQRAIAWWGIRMVRDLNMNYLAPLNASLPASRLGRQGEAPQADCRTCHQGVTKPLFGASRLKDYPELGPIKAAAK</sequence>
<comment type="function">
    <text evidence="4">The reaction center of purple bacteria contains a tightly bound cytochrome molecule which re-reduces the photo oxidized primary electron donor.</text>
</comment>
<comment type="biophysicochemical properties">
    <redoxPotential>
        <text evidence="4">E(0) is -60 mV for heme 1. E(0) is +320 mV for heme 2. E(0) is +380 mV for heme 3. E(0) is +15 mV for heme 4.</text>
    </redoxPotential>
</comment>
<comment type="subunit">
    <text evidence="3 5 6 7 9">Component of the photosynthetic reaction center composed of protein subunits L (PufL), M (PufM), H (PuhA) and cytochrome C (PufC).</text>
</comment>
<comment type="subcellular location">
    <subcellularLocation>
        <location evidence="3 7">Cellular chromatophore membrane</location>
        <topology evidence="5 8">Lipid-anchor</topology>
    </subcellularLocation>
</comment>
<comment type="PTM">
    <text evidence="3 4 5 6 7 9">Binds 4 heme groups per subunit.</text>
</comment>
<comment type="PTM">
    <text evidence="5 8">After the signal sequence is removed, the N-terminal cysteine is modified to form a diacylglyceride thioether, but the alpha-amino group is free and is not N-palmitoylated.</text>
</comment>
<comment type="disruption phenotype">
    <text evidence="4">Lack of photosynthesis.</text>
</comment>
<reference key="1">
    <citation type="journal article" date="1987" name="EMBO J.">
        <title>Amino acid sequence of the cytochrome subunit of the photosynthetic reaction centre from the purple bacterium Rhodopseudomonas viridis.</title>
        <authorList>
            <person name="Weyer K.A."/>
            <person name="Lottspeich F."/>
            <person name="Lang F."/>
            <person name="Oesterhelt D."/>
            <person name="Michel H."/>
        </authorList>
    </citation>
    <scope>NUCLEOTIDE SEQUENCE [GENOMIC DNA]</scope>
    <scope>PROTEIN SEQUENCE</scope>
    <source>
        <strain>ATCC 19567 / DSM 133 / F</strain>
    </source>
</reference>
<reference evidence="15 19 20" key="2">
    <citation type="journal article" date="2012" name="Biochem. J.">
        <title>New insights into the structure of the reaction centre from Blastochloris viridis: evolution in the laboratory.</title>
        <authorList>
            <person name="Roszak A.W."/>
            <person name="Moulisova V."/>
            <person name="Reksodipuro A.D."/>
            <person name="Gardiner A.T."/>
            <person name="Fujii R."/>
            <person name="Hashimoto H."/>
            <person name="Isaacs N.W."/>
            <person name="Cogdell R.J."/>
        </authorList>
    </citation>
    <scope>NUCLEOTIDE SEQUENCE [GENOMIC DNA]</scope>
    <scope>X-RAY CRYSTALLOGRAPHY (1.92 ANGSTROMS) OF WILD-TYPE AND MUTANT PRO-63/MET-97/GLU-104/SER-272/THR-275/MET-297/307-THR-VAL-308/GLN-343 IN COMPLEXES WITH HEME; PHOTOSYNTHETIC REACTION CENTER SUBUNITS PUFL; PUFM AND PUHA</scope>
    <scope>DIACYLGLYCEROL AT CYS-21</scope>
    <scope>LACK OF PALMITOYLATION AT CYS-21</scope>
    <source>
        <strain evidence="15">ATCC 19567 / DSM 133 / F</strain>
    </source>
</reference>
<reference evidence="16" key="3">
    <citation type="journal article" date="2016" name="Genome Announc.">
        <title>Revised genome sequence of the purple photosynthetic bacterium Blastochloris viridis.</title>
        <authorList>
            <person name="Liu L.N."/>
            <person name="Faulkner M."/>
            <person name="Liu X."/>
            <person name="Huang F."/>
            <person name="Darby A.C."/>
            <person name="Hall N."/>
        </authorList>
    </citation>
    <scope>NUCLEOTIDE SEQUENCE [LARGE SCALE GENOMIC DNA]</scope>
    <source>
        <strain evidence="11">ATCC 19567 / DSM 133 / F</strain>
    </source>
</reference>
<reference key="4">
    <citation type="journal article" date="1987" name="Biochemistry">
        <title>The cytochrome subunit of the photosynthetic reaction center from Rhodopseudomonas viridis is a lipoprotein.</title>
        <authorList>
            <person name="Weyer K.A."/>
            <person name="Schaefer W."/>
            <person name="Lottspeich F."/>
            <person name="Michel H."/>
        </authorList>
    </citation>
    <scope>NUCLEOTIDE SEQUENCE [GENOMIC DNA] OF 1-46</scope>
    <scope>DIACYLGLYCEROL AT CYS-21</scope>
    <scope>LACK OF PALMITOYLATION AT CYS-21</scope>
</reference>
<reference key="5">
    <citation type="journal article" date="2000" name="Biochemistry">
        <title>Uphill electron transfer in the tetraheme cytochrome subunit of the Rhodopseudomonas viridis photosynthetic reaction center: evidence from site-directed mutagenesis.</title>
        <authorList>
            <person name="Chen I.P."/>
            <person name="Mathis P."/>
            <person name="Koepke J."/>
            <person name="Michel H."/>
        </authorList>
    </citation>
    <scope>FUNCTION</scope>
    <scope>BIOPHYSICOCHEMICAL PROPERTIES</scope>
    <scope>PTM</scope>
    <scope>DISRUPTION PHENOTYPE</scope>
    <scope>MUTAGENESIS OF ARG-284</scope>
</reference>
<reference key="6">
    <citation type="journal article" date="1984" name="J. Mol. Biol.">
        <title>X-ray structure analysis of a membrane protein complex. Electron density map at 3-A resolution and a model of the chromophores of the photosynthetic reaction center from Rhodopseudomonas viridis.</title>
        <authorList>
            <person name="Deisenhofer J."/>
            <person name="Epp O."/>
            <person name="Miki K."/>
            <person name="Huber R."/>
            <person name="Michel H."/>
        </authorList>
    </citation>
    <scope>X-RAY CRYSTALLOGRAPHY (3 ANGSTROMS) IN COMPLEX WITH HEME; PHOTOSYNTHETIC REACTION CENTER SUBUNITS PUFL; PUFM AND PUHA</scope>
</reference>
<reference key="7">
    <citation type="journal article" date="1985" name="Nature">
        <title>Structure of the protein subunits in the photosynthetic reaction centre of Rhodopseudomonas viridis at 3-A resolution.</title>
        <authorList>
            <person name="Deisenhofer J."/>
            <person name="Epp O."/>
            <person name="Miki K."/>
            <person name="Huber R."/>
            <person name="Michel H."/>
        </authorList>
    </citation>
    <scope>X-RAY CRYSTALLOGRAPHY (3 ANGSTROMS) IN COMPLEX WITH HEME; PHOTOSYNTHETIC REACTION CENTER SUBUNITS PUFL; PUFM AND PUHA</scope>
</reference>
<reference evidence="17 18" key="8">
    <citation type="journal article" date="1997" name="Structure">
        <title>The coupling of light-induced electron transfer and proton uptake as derived from crystal structures of reaction centres from Rhodopseudomonas viridis modified at the binding site of the secondary quinone, QB.</title>
        <authorList>
            <person name="Lancaster C.R.D."/>
            <person name="Michel H."/>
        </authorList>
    </citation>
    <scope>X-RAY CRYSTALLOGRAPHY (2.40 ANGSTROMS)OF 21-356 IN COMPLEXES WITH HEME; PHOTOSYNTHETIC REACTION CENTER SUBUNITS PUFL; PUFM AND PUHA</scope>
    <scope>SUBCELLULAR LOCATION</scope>
    <source>
        <strain evidence="12">ATCC 19567 / DSM 133 / F</strain>
    </source>
</reference>
<reference evidence="21 22 23" key="9">
    <citation type="journal article" date="1999" name="J. Mol. Biol.">
        <title>Refined crystal structures of reaction centres from Rhodopseudomonas viridis in complexes with the herbicide atrazine and two chiral atrazine derivatives also lead to a new model of the bound carotenoid.</title>
        <authorList>
            <person name="Lancaster C.R.D."/>
            <person name="Michel H."/>
        </authorList>
    </citation>
    <scope>X-RAY CRYSTALLOGRAPHY (2.30 ANGSTROMS) OF 21-356 IN COMPLEXES WITH HEME; PHOTOSYNTHETIC REACTION CENTER SUBUNITS PUFL; PUFM AND PUHA</scope>
    <scope>SUBCELLULAR LOCATION</scope>
    <source>
        <strain evidence="10">ATCC 19567 / DSM 133 / F</strain>
    </source>
</reference>
<protein>
    <recommendedName>
        <fullName evidence="1">Photosynthetic reaction center cytochrome c subunit</fullName>
    </recommendedName>
    <alternativeName>
        <fullName>Cytochrome c558/c559</fullName>
    </alternativeName>
</protein>
<evidence type="ECO:0000255" key="1">
    <source>
        <dbReference type="PIRNR" id="PIRNR000017"/>
    </source>
</evidence>
<evidence type="ECO:0000255" key="2">
    <source>
        <dbReference type="PROSITE-ProRule" id="PRU00303"/>
    </source>
</evidence>
<evidence type="ECO:0000269" key="3">
    <source>
    </source>
</evidence>
<evidence type="ECO:0000269" key="4">
    <source>
    </source>
</evidence>
<evidence type="ECO:0000269" key="5">
    <source>
    </source>
</evidence>
<evidence type="ECO:0000269" key="6">
    <source>
    </source>
</evidence>
<evidence type="ECO:0000269" key="7">
    <source>
    </source>
</evidence>
<evidence type="ECO:0000269" key="8">
    <source ref="4"/>
</evidence>
<evidence type="ECO:0000269" key="9">
    <source ref="7"/>
</evidence>
<evidence type="ECO:0000303" key="10">
    <source>
    </source>
</evidence>
<evidence type="ECO:0000303" key="11">
    <source>
    </source>
</evidence>
<evidence type="ECO:0000303" key="12">
    <source>
    </source>
</evidence>
<evidence type="ECO:0000305" key="13"/>
<evidence type="ECO:0000312" key="14">
    <source>
        <dbReference type="EMBL" id="ACK86664.1"/>
    </source>
</evidence>
<evidence type="ECO:0000312" key="15">
    <source>
        <dbReference type="EMBL" id="ADN94690.1"/>
    </source>
</evidence>
<evidence type="ECO:0000312" key="16">
    <source>
        <dbReference type="EMBL" id="CUU41065.1"/>
    </source>
</evidence>
<evidence type="ECO:0007744" key="17">
    <source>
        <dbReference type="PDB" id="2PRC"/>
    </source>
</evidence>
<evidence type="ECO:0007744" key="18">
    <source>
        <dbReference type="PDB" id="3PRC"/>
    </source>
</evidence>
<evidence type="ECO:0007744" key="19">
    <source>
        <dbReference type="PDB" id="3T6D"/>
    </source>
</evidence>
<evidence type="ECO:0007744" key="20">
    <source>
        <dbReference type="PDB" id="3T6E"/>
    </source>
</evidence>
<evidence type="ECO:0007744" key="21">
    <source>
        <dbReference type="PDB" id="5PRC"/>
    </source>
</evidence>
<evidence type="ECO:0007744" key="22">
    <source>
        <dbReference type="PDB" id="6PRC"/>
    </source>
</evidence>
<evidence type="ECO:0007744" key="23">
    <source>
        <dbReference type="PDB" id="7PRC"/>
    </source>
</evidence>
<evidence type="ECO:0007829" key="24">
    <source>
        <dbReference type="PDB" id="2WJN"/>
    </source>
</evidence>
<evidence type="ECO:0007829" key="25">
    <source>
        <dbReference type="PDB" id="3T6D"/>
    </source>
</evidence>
<evidence type="ECO:0007829" key="26">
    <source>
        <dbReference type="PDB" id="3T6E"/>
    </source>
</evidence>
<accession>P07173</accession>
<accession>B8Y5U8</accession>
<accession>E2J7X6</accession>
<organism>
    <name type="scientific">Blastochloris viridis</name>
    <name type="common">Rhodopseudomonas viridis</name>
    <dbReference type="NCBI Taxonomy" id="1079"/>
    <lineage>
        <taxon>Bacteria</taxon>
        <taxon>Pseudomonadati</taxon>
        <taxon>Pseudomonadota</taxon>
        <taxon>Alphaproteobacteria</taxon>
        <taxon>Hyphomicrobiales</taxon>
        <taxon>Blastochloridaceae</taxon>
        <taxon>Blastochloris</taxon>
    </lineage>
</organism>
<gene>
    <name evidence="14 15" type="primary">pufC</name>
    <name type="synonym">cytC</name>
    <name evidence="16" type="ORF">BVIRIDIS_00500</name>
</gene>
<keyword id="KW-0002">3D-structure</keyword>
<keyword id="KW-0903">Direct protein sequencing</keyword>
<keyword id="KW-0249">Electron transport</keyword>
<keyword id="KW-0349">Heme</keyword>
<keyword id="KW-0408">Iron</keyword>
<keyword id="KW-0449">Lipoprotein</keyword>
<keyword id="KW-0472">Membrane</keyword>
<keyword id="KW-0479">Metal-binding</keyword>
<keyword id="KW-0602">Photosynthesis</keyword>
<keyword id="KW-0674">Reaction center</keyword>
<keyword id="KW-1185">Reference proteome</keyword>
<keyword id="KW-0732">Signal</keyword>
<keyword id="KW-0813">Transport</keyword>
<name>CYCR_BLAVI</name>
<dbReference type="EMBL" id="X05768">
    <property type="protein sequence ID" value="CAA29223.1"/>
    <property type="molecule type" value="Genomic_DNA"/>
</dbReference>
<dbReference type="EMBL" id="FJ483785">
    <property type="protein sequence ID" value="ACK86664.1"/>
    <property type="molecule type" value="Genomic_DNA"/>
</dbReference>
<dbReference type="EMBL" id="HQ009849">
    <property type="protein sequence ID" value="ADN94690.1"/>
    <property type="molecule type" value="Genomic_DNA"/>
</dbReference>
<dbReference type="EMBL" id="LN907867">
    <property type="protein sequence ID" value="CUU41065.1"/>
    <property type="molecule type" value="Genomic_DNA"/>
</dbReference>
<dbReference type="EMBL" id="M16317">
    <property type="protein sequence ID" value="AAA26093.1"/>
    <property type="molecule type" value="Genomic_DNA"/>
</dbReference>
<dbReference type="PIR" id="S00139">
    <property type="entry name" value="S00139"/>
</dbReference>
<dbReference type="RefSeq" id="WP_082416610.1">
    <property type="nucleotide sequence ID" value="NZ_AP014854.2"/>
</dbReference>
<dbReference type="PDB" id="1DXR">
    <property type="method" value="X-ray"/>
    <property type="resolution" value="2.00 A"/>
    <property type="chains" value="C=21-356"/>
</dbReference>
<dbReference type="PDB" id="1PRC">
    <property type="method" value="X-ray"/>
    <property type="resolution" value="2.30 A"/>
    <property type="chains" value="C=21-356"/>
</dbReference>
<dbReference type="PDB" id="1R2C">
    <property type="method" value="X-ray"/>
    <property type="resolution" value="2.86 A"/>
    <property type="chains" value="C=21-356"/>
</dbReference>
<dbReference type="PDB" id="1VRN">
    <property type="method" value="X-ray"/>
    <property type="resolution" value="2.20 A"/>
    <property type="chains" value="C=21-352"/>
</dbReference>
<dbReference type="PDB" id="2I5N">
    <property type="method" value="X-ray"/>
    <property type="resolution" value="1.96 A"/>
    <property type="chains" value="C=21-356"/>
</dbReference>
<dbReference type="PDB" id="2JBL">
    <property type="method" value="X-ray"/>
    <property type="resolution" value="2.40 A"/>
    <property type="chains" value="C=1-356"/>
</dbReference>
<dbReference type="PDB" id="2PRC">
    <property type="method" value="X-ray"/>
    <property type="resolution" value="2.45 A"/>
    <property type="chains" value="C=21-356"/>
</dbReference>
<dbReference type="PDB" id="2WJM">
    <property type="method" value="X-ray"/>
    <property type="resolution" value="1.95 A"/>
    <property type="chains" value="C=21-356"/>
</dbReference>
<dbReference type="PDB" id="2WJN">
    <property type="method" value="X-ray"/>
    <property type="resolution" value="1.86 A"/>
    <property type="chains" value="C=21-356"/>
</dbReference>
<dbReference type="PDB" id="2X5U">
    <property type="method" value="X-ray"/>
    <property type="resolution" value="3.00 A"/>
    <property type="chains" value="C=21-356"/>
</dbReference>
<dbReference type="PDB" id="2X5V">
    <property type="method" value="X-ray"/>
    <property type="resolution" value="3.00 A"/>
    <property type="chains" value="C=21-356"/>
</dbReference>
<dbReference type="PDB" id="3D38">
    <property type="method" value="X-ray"/>
    <property type="resolution" value="3.21 A"/>
    <property type="chains" value="C=21-356"/>
</dbReference>
<dbReference type="PDB" id="3G7F">
    <property type="method" value="X-ray"/>
    <property type="resolution" value="2.50 A"/>
    <property type="chains" value="C=21-356"/>
</dbReference>
<dbReference type="PDB" id="3PRC">
    <property type="method" value="X-ray"/>
    <property type="resolution" value="2.40 A"/>
    <property type="chains" value="C=21-356"/>
</dbReference>
<dbReference type="PDB" id="3T6D">
    <property type="method" value="X-ray"/>
    <property type="resolution" value="1.95 A"/>
    <property type="chains" value="C=1-356"/>
</dbReference>
<dbReference type="PDB" id="3T6E">
    <property type="method" value="X-ray"/>
    <property type="resolution" value="1.92 A"/>
    <property type="chains" value="C=1-356"/>
</dbReference>
<dbReference type="PDB" id="4AC5">
    <property type="method" value="X-ray"/>
    <property type="resolution" value="8.20 A"/>
    <property type="chains" value="C=21-356"/>
</dbReference>
<dbReference type="PDB" id="4CAS">
    <property type="method" value="X-ray"/>
    <property type="resolution" value="3.50 A"/>
    <property type="chains" value="A=1-356"/>
</dbReference>
<dbReference type="PDB" id="5M7J">
    <property type="method" value="X-ray"/>
    <property type="resolution" value="3.50 A"/>
    <property type="chains" value="A=1-356"/>
</dbReference>
<dbReference type="PDB" id="5M7K">
    <property type="method" value="X-ray"/>
    <property type="resolution" value="3.50 A"/>
    <property type="chains" value="A=1-356"/>
</dbReference>
<dbReference type="PDB" id="5M7L">
    <property type="method" value="X-ray"/>
    <property type="resolution" value="3.60 A"/>
    <property type="chains" value="A=1-356"/>
</dbReference>
<dbReference type="PDB" id="5NJ4">
    <property type="method" value="X-ray"/>
    <property type="resolution" value="2.40 A"/>
    <property type="chains" value="C=21-356"/>
</dbReference>
<dbReference type="PDB" id="5O4C">
    <property type="method" value="X-ray"/>
    <property type="resolution" value="2.80 A"/>
    <property type="chains" value="C=21-356"/>
</dbReference>
<dbReference type="PDB" id="5O64">
    <property type="method" value="X-ray"/>
    <property type="resolution" value="3.30 A"/>
    <property type="chains" value="C=21-356"/>
</dbReference>
<dbReference type="PDB" id="5PRC">
    <property type="method" value="X-ray"/>
    <property type="resolution" value="2.35 A"/>
    <property type="chains" value="C=21-356"/>
</dbReference>
<dbReference type="PDB" id="6ET5">
    <property type="method" value="EM"/>
    <property type="resolution" value="3.00 A"/>
    <property type="chains" value="C=21-353"/>
</dbReference>
<dbReference type="PDB" id="6PRC">
    <property type="method" value="X-ray"/>
    <property type="resolution" value="2.30 A"/>
    <property type="chains" value="C=21-356"/>
</dbReference>
<dbReference type="PDB" id="6ZHW">
    <property type="method" value="X-ray"/>
    <property type="resolution" value="2.80 A"/>
    <property type="chains" value="C=21-356"/>
</dbReference>
<dbReference type="PDB" id="6ZI4">
    <property type="method" value="X-ray"/>
    <property type="resolution" value="2.80 A"/>
    <property type="chains" value="C=21-356"/>
</dbReference>
<dbReference type="PDB" id="6ZI5">
    <property type="method" value="X-ray"/>
    <property type="resolution" value="2.80 A"/>
    <property type="chains" value="C=21-356"/>
</dbReference>
<dbReference type="PDB" id="6ZI6">
    <property type="method" value="X-ray"/>
    <property type="resolution" value="2.80 A"/>
    <property type="chains" value="C=21-356"/>
</dbReference>
<dbReference type="PDB" id="6ZI9">
    <property type="method" value="X-ray"/>
    <property type="resolution" value="2.80 A"/>
    <property type="chains" value="C=21-356"/>
</dbReference>
<dbReference type="PDB" id="6ZIA">
    <property type="method" value="X-ray"/>
    <property type="resolution" value="2.80 A"/>
    <property type="chains" value="C=21-356"/>
</dbReference>
<dbReference type="PDB" id="6ZID">
    <property type="method" value="X-ray"/>
    <property type="resolution" value="2.80 A"/>
    <property type="chains" value="C=21-356"/>
</dbReference>
<dbReference type="PDB" id="7PRC">
    <property type="method" value="X-ray"/>
    <property type="resolution" value="2.65 A"/>
    <property type="chains" value="C=21-356"/>
</dbReference>
<dbReference type="PDB" id="7Q7P">
    <property type="method" value="X-ray"/>
    <property type="resolution" value="2.40 A"/>
    <property type="chains" value="CCC=1-356"/>
</dbReference>
<dbReference type="PDB" id="7Q7Q">
    <property type="method" value="X-ray"/>
    <property type="resolution" value="2.25 A"/>
    <property type="chains" value="CCC=21-356"/>
</dbReference>
<dbReference type="PDBsum" id="1DXR"/>
<dbReference type="PDBsum" id="1PRC"/>
<dbReference type="PDBsum" id="1R2C"/>
<dbReference type="PDBsum" id="1VRN"/>
<dbReference type="PDBsum" id="2I5N"/>
<dbReference type="PDBsum" id="2JBL"/>
<dbReference type="PDBsum" id="2PRC"/>
<dbReference type="PDBsum" id="2WJM"/>
<dbReference type="PDBsum" id="2WJN"/>
<dbReference type="PDBsum" id="2X5U"/>
<dbReference type="PDBsum" id="2X5V"/>
<dbReference type="PDBsum" id="3D38"/>
<dbReference type="PDBsum" id="3G7F"/>
<dbReference type="PDBsum" id="3PRC"/>
<dbReference type="PDBsum" id="3T6D"/>
<dbReference type="PDBsum" id="3T6E"/>
<dbReference type="PDBsum" id="4AC5"/>
<dbReference type="PDBsum" id="4CAS"/>
<dbReference type="PDBsum" id="5M7J"/>
<dbReference type="PDBsum" id="5M7K"/>
<dbReference type="PDBsum" id="5M7L"/>
<dbReference type="PDBsum" id="5NJ4"/>
<dbReference type="PDBsum" id="5O4C"/>
<dbReference type="PDBsum" id="5O64"/>
<dbReference type="PDBsum" id="5PRC"/>
<dbReference type="PDBsum" id="6ET5"/>
<dbReference type="PDBsum" id="6PRC"/>
<dbReference type="PDBsum" id="6ZHW"/>
<dbReference type="PDBsum" id="6ZI4"/>
<dbReference type="PDBsum" id="6ZI5"/>
<dbReference type="PDBsum" id="6ZI6"/>
<dbReference type="PDBsum" id="6ZI9"/>
<dbReference type="PDBsum" id="6ZIA"/>
<dbReference type="PDBsum" id="6ZID"/>
<dbReference type="PDBsum" id="7PRC"/>
<dbReference type="PDBsum" id="7Q7P"/>
<dbReference type="PDBsum" id="7Q7Q"/>
<dbReference type="EMDB" id="EMD-3951"/>
<dbReference type="SMR" id="P07173"/>
<dbReference type="IntAct" id="P07173">
    <property type="interactions" value="6"/>
</dbReference>
<dbReference type="STRING" id="1079.BVIR_606"/>
<dbReference type="DrugBank" id="DB07552">
    <property type="generic name" value="(2R)-2-{[4-chloro-6-(ethylamino)-1,3,5-triazin-2-yl]amino}-2-methylbutanenitrile"/>
</dbReference>
<dbReference type="DrugBank" id="DB07551">
    <property type="generic name" value="(2S)-2-{[4-chloro-6-(ethylamino)-1,3,5-triazin-2-yl]amino}-2-methylbutanenitrile"/>
</dbReference>
<dbReference type="DrugBank" id="DB07392">
    <property type="generic name" value="Atrazine"/>
</dbReference>
<dbReference type="DrugBank" id="DB04147">
    <property type="generic name" value="Dodecyldimethylamine N-oxide"/>
</dbReference>
<dbReference type="DrugBank" id="DB04464">
    <property type="generic name" value="N-Formylmethionine"/>
</dbReference>
<dbReference type="DrugBank" id="DB08215">
    <property type="generic name" value="Terbutryn"/>
</dbReference>
<dbReference type="DrugBank" id="DB08689">
    <property type="generic name" value="Ubiquinone Q1"/>
</dbReference>
<dbReference type="DrugBank" id="DB08690">
    <property type="generic name" value="Ubiquinone Q2"/>
</dbReference>
<dbReference type="KEGG" id="bvr:BVIR_606"/>
<dbReference type="PATRIC" id="fig|1079.6.peg.623"/>
<dbReference type="OrthoDB" id="9813732at2"/>
<dbReference type="EvolutionaryTrace" id="P07173"/>
<dbReference type="Proteomes" id="UP000065734">
    <property type="component" value="Chromosome I"/>
</dbReference>
<dbReference type="GO" id="GO:0030077">
    <property type="term" value="C:plasma membrane light-harvesting complex"/>
    <property type="evidence" value="ECO:0007669"/>
    <property type="project" value="InterPro"/>
</dbReference>
<dbReference type="GO" id="GO:0042717">
    <property type="term" value="C:plasma membrane-derived chromatophore membrane"/>
    <property type="evidence" value="ECO:0000314"/>
    <property type="project" value="UniProtKB"/>
</dbReference>
<dbReference type="GO" id="GO:0009055">
    <property type="term" value="F:electron transfer activity"/>
    <property type="evidence" value="ECO:0007669"/>
    <property type="project" value="InterPro"/>
</dbReference>
<dbReference type="GO" id="GO:0020037">
    <property type="term" value="F:heme binding"/>
    <property type="evidence" value="ECO:0007669"/>
    <property type="project" value="InterPro"/>
</dbReference>
<dbReference type="GO" id="GO:0005506">
    <property type="term" value="F:iron ion binding"/>
    <property type="evidence" value="ECO:0007669"/>
    <property type="project" value="InterPro"/>
</dbReference>
<dbReference type="GO" id="GO:0015979">
    <property type="term" value="P:photosynthesis"/>
    <property type="evidence" value="ECO:0000315"/>
    <property type="project" value="UniProtKB"/>
</dbReference>
<dbReference type="GO" id="GO:0019684">
    <property type="term" value="P:photosynthesis, light reaction"/>
    <property type="evidence" value="ECO:0007669"/>
    <property type="project" value="InterPro"/>
</dbReference>
<dbReference type="CDD" id="cd09224">
    <property type="entry name" value="CytoC_RC"/>
    <property type="match status" value="1"/>
</dbReference>
<dbReference type="FunFam" id="1.10.468.10:FF:000001">
    <property type="entry name" value="Photosynthetic reaction center cytochrome c subunit"/>
    <property type="match status" value="1"/>
</dbReference>
<dbReference type="FunFam" id="1.10.468.10:FF:000002">
    <property type="entry name" value="Photosynthetic reaction center cytochrome c subunit"/>
    <property type="match status" value="1"/>
</dbReference>
<dbReference type="Gene3D" id="1.10.468.10">
    <property type="entry name" value="Photosynthetic Reaction Center, subunit C, domain 2"/>
    <property type="match status" value="2"/>
</dbReference>
<dbReference type="InterPro" id="IPR023119">
    <property type="entry name" value="Multihaem_cyt_PRC_cyt_su-like"/>
</dbReference>
<dbReference type="InterPro" id="IPR036280">
    <property type="entry name" value="Multihaem_cyt_sf"/>
</dbReference>
<dbReference type="InterPro" id="IPR003158">
    <property type="entry name" value="Photosyn_RC_cyt_c-su"/>
</dbReference>
<dbReference type="NCBIfam" id="NF040706">
    <property type="entry name" value="photo_cyt_PufC"/>
    <property type="match status" value="1"/>
</dbReference>
<dbReference type="Pfam" id="PF02276">
    <property type="entry name" value="CytoC_RC"/>
    <property type="match status" value="1"/>
</dbReference>
<dbReference type="PIRSF" id="PIRSF000017">
    <property type="entry name" value="RC_cytochrome"/>
    <property type="match status" value="1"/>
</dbReference>
<dbReference type="SUPFAM" id="SSF48695">
    <property type="entry name" value="Multiheme cytochromes"/>
    <property type="match status" value="1"/>
</dbReference>
<dbReference type="PROSITE" id="PS51008">
    <property type="entry name" value="MULTIHEME_CYTC"/>
    <property type="match status" value="1"/>
</dbReference>
<dbReference type="PROSITE" id="PS51257">
    <property type="entry name" value="PROKAR_LIPOPROTEIN"/>
    <property type="match status" value="1"/>
</dbReference>